<name>PLSY_DESDA</name>
<organism>
    <name type="scientific">Desulfovibrio desulfuricans (strain ATCC 27774 / DSM 6949 / MB)</name>
    <dbReference type="NCBI Taxonomy" id="525146"/>
    <lineage>
        <taxon>Bacteria</taxon>
        <taxon>Pseudomonadati</taxon>
        <taxon>Thermodesulfobacteriota</taxon>
        <taxon>Desulfovibrionia</taxon>
        <taxon>Desulfovibrionales</taxon>
        <taxon>Desulfovibrionaceae</taxon>
        <taxon>Desulfovibrio</taxon>
    </lineage>
</organism>
<proteinExistence type="inferred from homology"/>
<feature type="chain" id="PRO_1000149568" description="Glycerol-3-phosphate acyltransferase">
    <location>
        <begin position="1"/>
        <end position="223"/>
    </location>
</feature>
<feature type="transmembrane region" description="Helical" evidence="1">
    <location>
        <begin position="2"/>
        <end position="22"/>
    </location>
</feature>
<feature type="transmembrane region" description="Helical" evidence="1">
    <location>
        <begin position="52"/>
        <end position="72"/>
    </location>
</feature>
<feature type="transmembrane region" description="Helical" evidence="1">
    <location>
        <begin position="78"/>
        <end position="98"/>
    </location>
</feature>
<feature type="transmembrane region" description="Helical" evidence="1">
    <location>
        <begin position="112"/>
        <end position="132"/>
    </location>
</feature>
<feature type="transmembrane region" description="Helical" evidence="1">
    <location>
        <begin position="153"/>
        <end position="173"/>
    </location>
</feature>
<feature type="region of interest" description="Disordered" evidence="2">
    <location>
        <begin position="191"/>
        <end position="223"/>
    </location>
</feature>
<accession>B8J229</accession>
<gene>
    <name evidence="1" type="primary">plsY</name>
    <name type="ordered locus">Ddes_0104</name>
</gene>
<evidence type="ECO:0000255" key="1">
    <source>
        <dbReference type="HAMAP-Rule" id="MF_01043"/>
    </source>
</evidence>
<evidence type="ECO:0000256" key="2">
    <source>
        <dbReference type="SAM" id="MobiDB-lite"/>
    </source>
</evidence>
<keyword id="KW-0997">Cell inner membrane</keyword>
<keyword id="KW-1003">Cell membrane</keyword>
<keyword id="KW-0444">Lipid biosynthesis</keyword>
<keyword id="KW-0443">Lipid metabolism</keyword>
<keyword id="KW-0472">Membrane</keyword>
<keyword id="KW-0594">Phospholipid biosynthesis</keyword>
<keyword id="KW-1208">Phospholipid metabolism</keyword>
<keyword id="KW-0808">Transferase</keyword>
<keyword id="KW-0812">Transmembrane</keyword>
<keyword id="KW-1133">Transmembrane helix</keyword>
<dbReference type="EC" id="2.3.1.275" evidence="1"/>
<dbReference type="EMBL" id="CP001358">
    <property type="protein sequence ID" value="ACL48024.1"/>
    <property type="molecule type" value="Genomic_DNA"/>
</dbReference>
<dbReference type="SMR" id="B8J229"/>
<dbReference type="STRING" id="525146.Ddes_0104"/>
<dbReference type="KEGG" id="dds:Ddes_0104"/>
<dbReference type="eggNOG" id="COG0344">
    <property type="taxonomic scope" value="Bacteria"/>
</dbReference>
<dbReference type="HOGENOM" id="CLU_081254_0_2_7"/>
<dbReference type="UniPathway" id="UPA00085"/>
<dbReference type="GO" id="GO:0005886">
    <property type="term" value="C:plasma membrane"/>
    <property type="evidence" value="ECO:0007669"/>
    <property type="project" value="UniProtKB-SubCell"/>
</dbReference>
<dbReference type="GO" id="GO:0043772">
    <property type="term" value="F:acyl-phosphate glycerol-3-phosphate acyltransferase activity"/>
    <property type="evidence" value="ECO:0007669"/>
    <property type="project" value="UniProtKB-UniRule"/>
</dbReference>
<dbReference type="GO" id="GO:0008654">
    <property type="term" value="P:phospholipid biosynthetic process"/>
    <property type="evidence" value="ECO:0007669"/>
    <property type="project" value="UniProtKB-UniRule"/>
</dbReference>
<dbReference type="HAMAP" id="MF_01043">
    <property type="entry name" value="PlsY"/>
    <property type="match status" value="1"/>
</dbReference>
<dbReference type="InterPro" id="IPR003811">
    <property type="entry name" value="G3P_acylTferase_PlsY"/>
</dbReference>
<dbReference type="NCBIfam" id="TIGR00023">
    <property type="entry name" value="glycerol-3-phosphate 1-O-acyltransferase PlsY"/>
    <property type="match status" value="1"/>
</dbReference>
<dbReference type="PANTHER" id="PTHR30309:SF0">
    <property type="entry name" value="GLYCEROL-3-PHOSPHATE ACYLTRANSFERASE-RELATED"/>
    <property type="match status" value="1"/>
</dbReference>
<dbReference type="PANTHER" id="PTHR30309">
    <property type="entry name" value="INNER MEMBRANE PROTEIN YGIH"/>
    <property type="match status" value="1"/>
</dbReference>
<dbReference type="Pfam" id="PF02660">
    <property type="entry name" value="G3P_acyltransf"/>
    <property type="match status" value="1"/>
</dbReference>
<dbReference type="SMART" id="SM01207">
    <property type="entry name" value="G3P_acyltransf"/>
    <property type="match status" value="1"/>
</dbReference>
<sequence length="223" mass="23862">MLEILWIALAYVLGSAPWGLVIARTFCGIDPRESGSRNTGATNVARLCGFGWGVATLLCDVLKGAVPVWLAFRINASPVFVSMVALACVLGHVFSCFMKFRGGKAVATSIGIFLPLAFWQLLASSLLCMLVIWRSGFVSLGSLTLVTALPVALAVSGQWGWLPLSLAVWAVVVWKHRENIVRLRSGTEKSWLKSKNKGAAAGNAAEGDDTQNMNPQDAGRKDG</sequence>
<comment type="function">
    <text evidence="1">Catalyzes the transfer of an acyl group from acyl-phosphate (acyl-PO(4)) to glycerol-3-phosphate (G3P) to form lysophosphatidic acid (LPA). This enzyme utilizes acyl-phosphate as fatty acyl donor, but not acyl-CoA or acyl-ACP.</text>
</comment>
<comment type="catalytic activity">
    <reaction evidence="1">
        <text>an acyl phosphate + sn-glycerol 3-phosphate = a 1-acyl-sn-glycero-3-phosphate + phosphate</text>
        <dbReference type="Rhea" id="RHEA:34075"/>
        <dbReference type="ChEBI" id="CHEBI:43474"/>
        <dbReference type="ChEBI" id="CHEBI:57597"/>
        <dbReference type="ChEBI" id="CHEBI:57970"/>
        <dbReference type="ChEBI" id="CHEBI:59918"/>
        <dbReference type="EC" id="2.3.1.275"/>
    </reaction>
</comment>
<comment type="pathway">
    <text evidence="1">Lipid metabolism; phospholipid metabolism.</text>
</comment>
<comment type="subunit">
    <text evidence="1">Probably interacts with PlsX.</text>
</comment>
<comment type="subcellular location">
    <subcellularLocation>
        <location evidence="1">Cell inner membrane</location>
        <topology evidence="1">Multi-pass membrane protein</topology>
    </subcellularLocation>
</comment>
<comment type="similarity">
    <text evidence="1">Belongs to the PlsY family.</text>
</comment>
<reference key="1">
    <citation type="submission" date="2009-01" db="EMBL/GenBank/DDBJ databases">
        <title>Complete sequence of Desulfovibrio desulfuricans subsp. desulfuricans str. ATCC 27774.</title>
        <authorList>
            <consortium name="US DOE Joint Genome Institute"/>
            <person name="Lucas S."/>
            <person name="Copeland A."/>
            <person name="Lapidus A."/>
            <person name="Glavina del Rio T."/>
            <person name="Tice H."/>
            <person name="Bruce D."/>
            <person name="Goodwin L."/>
            <person name="Pitluck S."/>
            <person name="Sims D."/>
            <person name="Lu M."/>
            <person name="Kiss H."/>
            <person name="Meineke L."/>
            <person name="Brettin T."/>
            <person name="Detter J.C."/>
            <person name="Han C."/>
            <person name="Larimer F."/>
            <person name="Land M."/>
            <person name="Hauser L."/>
            <person name="Kyrpides N."/>
            <person name="Ovchinnikova G."/>
            <person name="Hazen T.C."/>
        </authorList>
    </citation>
    <scope>NUCLEOTIDE SEQUENCE [LARGE SCALE GENOMIC DNA]</scope>
    <source>
        <strain>ATCC 27774 / DSM 6949 / MB</strain>
    </source>
</reference>
<protein>
    <recommendedName>
        <fullName evidence="1">Glycerol-3-phosphate acyltransferase</fullName>
    </recommendedName>
    <alternativeName>
        <fullName evidence="1">Acyl-PO4 G3P acyltransferase</fullName>
    </alternativeName>
    <alternativeName>
        <fullName evidence="1">Acyl-phosphate--glycerol-3-phosphate acyltransferase</fullName>
    </alternativeName>
    <alternativeName>
        <fullName evidence="1">G3P acyltransferase</fullName>
        <shortName evidence="1">GPAT</shortName>
        <ecNumber evidence="1">2.3.1.275</ecNumber>
    </alternativeName>
    <alternativeName>
        <fullName evidence="1">Lysophosphatidic acid synthase</fullName>
        <shortName evidence="1">LPA synthase</shortName>
    </alternativeName>
</protein>